<protein>
    <recommendedName>
        <fullName evidence="1">ATPase ASNA1 homolog</fullName>
        <ecNumber evidence="1">3.6.-.-</ecNumber>
    </recommendedName>
    <alternativeName>
        <fullName evidence="1">Arsenical pump-driving ATPase homolog</fullName>
    </alternativeName>
    <alternativeName>
        <fullName evidence="1">Arsenite-stimulated ATPase</fullName>
    </alternativeName>
</protein>
<sequence length="409" mass="43936">MDPTLKELLHANLEWIFVGGKGGVGKTTTSCALATLFATTPISDAASPGGTRPRRVLLISTDPAHNLSDAFNQRFGPHPTPVKGLEESLAAMEVDPKNFTHGALMSSLTGAKSDGSASSLSAEAEADAAQHTASFARIGAVLKEAARTMPGIDEISVFAEILHYVRTLFYDLLIFDTAPTGHTLRLLALPQTLSSTFDKLMSLEGLAPMIEAASHLIGTNLGALGGACGDTAGSCEQATAAPSLSSAAPGEGSAAAASSQSRWCITADEVRSTALHWRQTMEEVQARFNDPNRTSFVCVCIAEFLSVYETERLVQELMKYNIGCDSIVVNQLVLKPSSEPPCRMCSARQKIQAKYLEQIDLLYEDFHVVKMPLLSDEVRGVPALKKFARFLQEPYSPDTHGYIDVQEPC</sequence>
<gene>
    <name type="ORF">LmjF11.0700</name>
    <name type="ORF">LmjF_11_0700</name>
</gene>
<keyword id="KW-0067">ATP-binding</keyword>
<keyword id="KW-0963">Cytoplasm</keyword>
<keyword id="KW-0256">Endoplasmic reticulum</keyword>
<keyword id="KW-0378">Hydrolase</keyword>
<keyword id="KW-0479">Metal-binding</keyword>
<keyword id="KW-0547">Nucleotide-binding</keyword>
<keyword id="KW-1185">Reference proteome</keyword>
<keyword id="KW-0813">Transport</keyword>
<keyword id="KW-0862">Zinc</keyword>
<comment type="function">
    <text evidence="1">ATPase required for the post-translational delivery of tail-anchored (TA) proteins to the endoplasmic reticulum. Recognizes and selectively binds the transmembrane domain of TA proteins in the cytosol. This complex then targets to the endoplasmic reticulum by membrane-bound receptors, where the tail-anchored protein is released for insertion. This process is regulated by ATP binding and hydrolysis. ATP binding drives the homodimer towards the closed dimer state, facilitating recognition of newly synthesized TA membrane proteins. ATP hydrolysis is required for insertion. Subsequently, the homodimer reverts towards the open dimer state, lowering its affinity for the membrane-bound receptor, and returning it to the cytosol to initiate a new round of targeting.</text>
</comment>
<comment type="subunit">
    <text evidence="1">Homodimer.</text>
</comment>
<comment type="subcellular location">
    <subcellularLocation>
        <location evidence="1">Cytoplasm</location>
    </subcellularLocation>
    <subcellularLocation>
        <location evidence="1">Endoplasmic reticulum</location>
    </subcellularLocation>
</comment>
<comment type="similarity">
    <text evidence="1">Belongs to the arsA ATPase family.</text>
</comment>
<feature type="chain" id="PRO_0000388179" description="ATPase ASNA1 homolog">
    <location>
        <begin position="1"/>
        <end position="409"/>
    </location>
</feature>
<feature type="active site" evidence="1">
    <location>
        <position position="62"/>
    </location>
</feature>
<feature type="binding site" evidence="1">
    <location>
        <begin position="21"/>
        <end position="28"/>
    </location>
    <ligand>
        <name>ATP</name>
        <dbReference type="ChEBI" id="CHEBI:30616"/>
    </ligand>
</feature>
<feature type="binding site" evidence="1">
    <location>
        <position position="303"/>
    </location>
    <ligand>
        <name>ATP</name>
        <dbReference type="ChEBI" id="CHEBI:30616"/>
    </ligand>
</feature>
<feature type="binding site" evidence="1">
    <location>
        <position position="330"/>
    </location>
    <ligand>
        <name>ATP</name>
        <dbReference type="ChEBI" id="CHEBI:30616"/>
    </ligand>
</feature>
<feature type="binding site" evidence="1">
    <location>
        <position position="342"/>
    </location>
    <ligand>
        <name>Zn(2+)</name>
        <dbReference type="ChEBI" id="CHEBI:29105"/>
        <note>ligand shared between dimeric partners</note>
    </ligand>
</feature>
<feature type="binding site" evidence="1">
    <location>
        <position position="345"/>
    </location>
    <ligand>
        <name>Zn(2+)</name>
        <dbReference type="ChEBI" id="CHEBI:29105"/>
        <note>ligand shared between dimeric partners</note>
    </ligand>
</feature>
<proteinExistence type="inferred from homology"/>
<organism>
    <name type="scientific">Leishmania major</name>
    <dbReference type="NCBI Taxonomy" id="5664"/>
    <lineage>
        <taxon>Eukaryota</taxon>
        <taxon>Discoba</taxon>
        <taxon>Euglenozoa</taxon>
        <taxon>Kinetoplastea</taxon>
        <taxon>Metakinetoplastina</taxon>
        <taxon>Trypanosomatida</taxon>
        <taxon>Trypanosomatidae</taxon>
        <taxon>Leishmaniinae</taxon>
        <taxon>Leishmania</taxon>
    </lineage>
</organism>
<dbReference type="EC" id="3.6.-.-" evidence="1"/>
<dbReference type="EMBL" id="FR796407">
    <property type="protein sequence ID" value="CAJ02741.1"/>
    <property type="molecule type" value="Genomic_DNA"/>
</dbReference>
<dbReference type="RefSeq" id="XP_001681540.1">
    <property type="nucleotide sequence ID" value="XM_001681488.1"/>
</dbReference>
<dbReference type="SMR" id="Q4QH08"/>
<dbReference type="FunCoup" id="Q4QH08">
    <property type="interactions" value="417"/>
</dbReference>
<dbReference type="STRING" id="5664.Q4QH08"/>
<dbReference type="EnsemblProtists" id="CAJ02741">
    <property type="protein sequence ID" value="CAJ02741"/>
    <property type="gene ID" value="LMJF_11_0700"/>
</dbReference>
<dbReference type="GeneID" id="5649821"/>
<dbReference type="KEGG" id="lma:LMJF_11_0700"/>
<dbReference type="VEuPathDB" id="TriTrypDB:LmjF.11.0700"/>
<dbReference type="VEuPathDB" id="TriTrypDB:LMJFC_110014000"/>
<dbReference type="VEuPathDB" id="TriTrypDB:LMJLV39_110013700"/>
<dbReference type="VEuPathDB" id="TriTrypDB:LMJSD75_110014300"/>
<dbReference type="eggNOG" id="KOG2825">
    <property type="taxonomic scope" value="Eukaryota"/>
</dbReference>
<dbReference type="InParanoid" id="Q4QH08"/>
<dbReference type="OMA" id="MDAPYEF"/>
<dbReference type="Proteomes" id="UP000000542">
    <property type="component" value="Chromosome 11"/>
</dbReference>
<dbReference type="GO" id="GO:0043529">
    <property type="term" value="C:GET complex"/>
    <property type="evidence" value="ECO:0000318"/>
    <property type="project" value="GO_Central"/>
</dbReference>
<dbReference type="GO" id="GO:0005524">
    <property type="term" value="F:ATP binding"/>
    <property type="evidence" value="ECO:0007669"/>
    <property type="project" value="UniProtKB-UniRule"/>
</dbReference>
<dbReference type="GO" id="GO:0016887">
    <property type="term" value="F:ATP hydrolysis activity"/>
    <property type="evidence" value="ECO:0000318"/>
    <property type="project" value="GO_Central"/>
</dbReference>
<dbReference type="GO" id="GO:0046872">
    <property type="term" value="F:metal ion binding"/>
    <property type="evidence" value="ECO:0007669"/>
    <property type="project" value="UniProtKB-KW"/>
</dbReference>
<dbReference type="GO" id="GO:0071816">
    <property type="term" value="P:tail-anchored membrane protein insertion into ER membrane"/>
    <property type="evidence" value="ECO:0000318"/>
    <property type="project" value="GO_Central"/>
</dbReference>
<dbReference type="CDD" id="cd02035">
    <property type="entry name" value="ArsA"/>
    <property type="match status" value="1"/>
</dbReference>
<dbReference type="Gene3D" id="3.40.50.300">
    <property type="entry name" value="P-loop containing nucleotide triphosphate hydrolases"/>
    <property type="match status" value="1"/>
</dbReference>
<dbReference type="HAMAP" id="MF_03112">
    <property type="entry name" value="Asna1_Get3"/>
    <property type="match status" value="1"/>
</dbReference>
<dbReference type="InterPro" id="IPR025723">
    <property type="entry name" value="Anion-transp_ATPase-like_dom"/>
</dbReference>
<dbReference type="InterPro" id="IPR016300">
    <property type="entry name" value="ATPase_ArsA/GET3"/>
</dbReference>
<dbReference type="InterPro" id="IPR027542">
    <property type="entry name" value="ATPase_ArsA/GET3_euk"/>
</dbReference>
<dbReference type="InterPro" id="IPR027417">
    <property type="entry name" value="P-loop_NTPase"/>
</dbReference>
<dbReference type="NCBIfam" id="TIGR00345">
    <property type="entry name" value="GET3_arsA_TRC40"/>
    <property type="match status" value="1"/>
</dbReference>
<dbReference type="PANTHER" id="PTHR10803">
    <property type="entry name" value="ARSENICAL PUMP-DRIVING ATPASE ARSENITE-TRANSLOCATING ATPASE"/>
    <property type="match status" value="1"/>
</dbReference>
<dbReference type="PANTHER" id="PTHR10803:SF3">
    <property type="entry name" value="ATPASE GET3"/>
    <property type="match status" value="1"/>
</dbReference>
<dbReference type="Pfam" id="PF02374">
    <property type="entry name" value="ArsA_ATPase"/>
    <property type="match status" value="2"/>
</dbReference>
<dbReference type="SUPFAM" id="SSF52540">
    <property type="entry name" value="P-loop containing nucleoside triphosphate hydrolases"/>
    <property type="match status" value="1"/>
</dbReference>
<accession>Q4QH08</accession>
<evidence type="ECO:0000255" key="1">
    <source>
        <dbReference type="HAMAP-Rule" id="MF_03112"/>
    </source>
</evidence>
<reference key="1">
    <citation type="journal article" date="2005" name="Science">
        <title>The genome of the kinetoplastid parasite, Leishmania major.</title>
        <authorList>
            <person name="Ivens A.C."/>
            <person name="Peacock C.S."/>
            <person name="Worthey E.A."/>
            <person name="Murphy L."/>
            <person name="Aggarwal G."/>
            <person name="Berriman M."/>
            <person name="Sisk E."/>
            <person name="Rajandream M.A."/>
            <person name="Adlem E."/>
            <person name="Aert R."/>
            <person name="Anupama A."/>
            <person name="Apostolou Z."/>
            <person name="Attipoe P."/>
            <person name="Bason N."/>
            <person name="Bauser C."/>
            <person name="Beck A."/>
            <person name="Beverley S.M."/>
            <person name="Bianchettin G."/>
            <person name="Borzym K."/>
            <person name="Bothe G."/>
            <person name="Bruschi C.V."/>
            <person name="Collins M."/>
            <person name="Cadag E."/>
            <person name="Ciarloni L."/>
            <person name="Clayton C."/>
            <person name="Coulson R.M.R."/>
            <person name="Cronin A."/>
            <person name="Cruz A.K."/>
            <person name="Davies R.M."/>
            <person name="De Gaudenzi J."/>
            <person name="Dobson D.E."/>
            <person name="Duesterhoeft A."/>
            <person name="Fazelina G."/>
            <person name="Fosker N."/>
            <person name="Frasch A.C."/>
            <person name="Fraser A."/>
            <person name="Fuchs M."/>
            <person name="Gabel C."/>
            <person name="Goble A."/>
            <person name="Goffeau A."/>
            <person name="Harris D."/>
            <person name="Hertz-Fowler C."/>
            <person name="Hilbert H."/>
            <person name="Horn D."/>
            <person name="Huang Y."/>
            <person name="Klages S."/>
            <person name="Knights A."/>
            <person name="Kube M."/>
            <person name="Larke N."/>
            <person name="Litvin L."/>
            <person name="Lord A."/>
            <person name="Louie T."/>
            <person name="Marra M."/>
            <person name="Masuy D."/>
            <person name="Matthews K."/>
            <person name="Michaeli S."/>
            <person name="Mottram J.C."/>
            <person name="Mueller-Auer S."/>
            <person name="Munden H."/>
            <person name="Nelson S."/>
            <person name="Norbertczak H."/>
            <person name="Oliver K."/>
            <person name="O'neil S."/>
            <person name="Pentony M."/>
            <person name="Pohl T.M."/>
            <person name="Price C."/>
            <person name="Purnelle B."/>
            <person name="Quail M.A."/>
            <person name="Rabbinowitsch E."/>
            <person name="Reinhardt R."/>
            <person name="Rieger M."/>
            <person name="Rinta J."/>
            <person name="Robben J."/>
            <person name="Robertson L."/>
            <person name="Ruiz J.C."/>
            <person name="Rutter S."/>
            <person name="Saunders D."/>
            <person name="Schaefer M."/>
            <person name="Schein J."/>
            <person name="Schwartz D.C."/>
            <person name="Seeger K."/>
            <person name="Seyler A."/>
            <person name="Sharp S."/>
            <person name="Shin H."/>
            <person name="Sivam D."/>
            <person name="Squares R."/>
            <person name="Squares S."/>
            <person name="Tosato V."/>
            <person name="Vogt C."/>
            <person name="Volckaert G."/>
            <person name="Wambutt R."/>
            <person name="Warren T."/>
            <person name="Wedler H."/>
            <person name="Woodward J."/>
            <person name="Zhou S."/>
            <person name="Zimmermann W."/>
            <person name="Smith D.F."/>
            <person name="Blackwell J.M."/>
            <person name="Stuart K.D."/>
            <person name="Barrell B.G."/>
            <person name="Myler P.J."/>
        </authorList>
    </citation>
    <scope>NUCLEOTIDE SEQUENCE [LARGE SCALE GENOMIC DNA]</scope>
    <source>
        <strain>MHOM/IL/81/Friedlin</strain>
    </source>
</reference>
<name>ASNA_LEIMA</name>